<protein>
    <recommendedName>
        <fullName>Transcription factor MYB39</fullName>
    </recommendedName>
    <alternativeName>
        <fullName>Myb-related protein 39</fullName>
        <shortName>AtMYB39</shortName>
    </alternativeName>
</protein>
<dbReference type="EMBL" id="AF175989">
    <property type="protein sequence ID" value="AAD53094.1"/>
    <property type="molecule type" value="mRNA"/>
</dbReference>
<dbReference type="EMBL" id="AY550297">
    <property type="protein sequence ID" value="AAS58508.1"/>
    <property type="molecule type" value="mRNA"/>
</dbReference>
<dbReference type="EMBL" id="Z97344">
    <property type="protein sequence ID" value="CAB10558.1"/>
    <property type="status" value="ALT_SEQ"/>
    <property type="molecule type" value="Genomic_DNA"/>
</dbReference>
<dbReference type="EMBL" id="AL161547">
    <property type="protein sequence ID" value="CAB78781.1"/>
    <property type="status" value="ALT_SEQ"/>
    <property type="molecule type" value="Genomic_DNA"/>
</dbReference>
<dbReference type="EMBL" id="CP002687">
    <property type="protein sequence ID" value="AEE83950.1"/>
    <property type="molecule type" value="Genomic_DNA"/>
</dbReference>
<dbReference type="EMBL" id="CP002687">
    <property type="protein sequence ID" value="ANM67395.1"/>
    <property type="molecule type" value="Genomic_DNA"/>
</dbReference>
<dbReference type="EMBL" id="AK118728">
    <property type="protein sequence ID" value="BAC43322.1"/>
    <property type="molecule type" value="mRNA"/>
</dbReference>
<dbReference type="EMBL" id="BT005642">
    <property type="protein sequence ID" value="AAO64062.1"/>
    <property type="molecule type" value="mRNA"/>
</dbReference>
<dbReference type="PIR" id="A71448">
    <property type="entry name" value="A71448"/>
</dbReference>
<dbReference type="RefSeq" id="NP_001329227.1">
    <molecule id="Q8GWP0-2"/>
    <property type="nucleotide sequence ID" value="NM_001341242.1"/>
</dbReference>
<dbReference type="RefSeq" id="NP_567540.2">
    <molecule id="Q8GWP0-1"/>
    <property type="nucleotide sequence ID" value="NM_117888.3"/>
</dbReference>
<dbReference type="SMR" id="Q8GWP0"/>
<dbReference type="BioGRID" id="12793">
    <property type="interactions" value="88"/>
</dbReference>
<dbReference type="IntAct" id="Q8GWP0">
    <property type="interactions" value="87"/>
</dbReference>
<dbReference type="STRING" id="3702.Q8GWP0"/>
<dbReference type="PaxDb" id="3702-AT4G17785.1"/>
<dbReference type="EnsemblPlants" id="AT4G17785.1">
    <molecule id="Q8GWP0-1"/>
    <property type="protein sequence ID" value="AT4G17785.1"/>
    <property type="gene ID" value="AT4G17785"/>
</dbReference>
<dbReference type="EnsemblPlants" id="AT4G17785.2">
    <molecule id="Q8GWP0-2"/>
    <property type="protein sequence ID" value="AT4G17785.2"/>
    <property type="gene ID" value="AT4G17785"/>
</dbReference>
<dbReference type="GeneID" id="827500"/>
<dbReference type="Gramene" id="AT4G17785.1">
    <molecule id="Q8GWP0-1"/>
    <property type="protein sequence ID" value="AT4G17785.1"/>
    <property type="gene ID" value="AT4G17785"/>
</dbReference>
<dbReference type="Gramene" id="AT4G17785.2">
    <molecule id="Q8GWP0-2"/>
    <property type="protein sequence ID" value="AT4G17785.2"/>
    <property type="gene ID" value="AT4G17785"/>
</dbReference>
<dbReference type="KEGG" id="ath:AT4G17785"/>
<dbReference type="Araport" id="AT4G17785"/>
<dbReference type="TAIR" id="AT4G17785">
    <property type="gene designation" value="MYB39"/>
</dbReference>
<dbReference type="eggNOG" id="KOG0048">
    <property type="taxonomic scope" value="Eukaryota"/>
</dbReference>
<dbReference type="HOGENOM" id="CLU_028567_15_1_1"/>
<dbReference type="InParanoid" id="Q8GWP0"/>
<dbReference type="OMA" id="MTHEPRT"/>
<dbReference type="PhylomeDB" id="Q8GWP0"/>
<dbReference type="PRO" id="PR:Q8GWP0"/>
<dbReference type="Proteomes" id="UP000006548">
    <property type="component" value="Chromosome 4"/>
</dbReference>
<dbReference type="ExpressionAtlas" id="Q8GWP0">
    <property type="expression patterns" value="baseline and differential"/>
</dbReference>
<dbReference type="GO" id="GO:0048226">
    <property type="term" value="C:Casparian strip"/>
    <property type="evidence" value="ECO:0000314"/>
    <property type="project" value="TAIR"/>
</dbReference>
<dbReference type="GO" id="GO:0005634">
    <property type="term" value="C:nucleus"/>
    <property type="evidence" value="ECO:0007669"/>
    <property type="project" value="UniProtKB-SubCell"/>
</dbReference>
<dbReference type="GO" id="GO:0003677">
    <property type="term" value="F:DNA binding"/>
    <property type="evidence" value="ECO:0007669"/>
    <property type="project" value="UniProtKB-KW"/>
</dbReference>
<dbReference type="GO" id="GO:0003700">
    <property type="term" value="F:DNA-binding transcription factor activity"/>
    <property type="evidence" value="ECO:0000314"/>
    <property type="project" value="TAIR"/>
</dbReference>
<dbReference type="GO" id="GO:0045893">
    <property type="term" value="P:positive regulation of DNA-templated transcription"/>
    <property type="evidence" value="ECO:0000314"/>
    <property type="project" value="TAIR"/>
</dbReference>
<dbReference type="GO" id="GO:2000762">
    <property type="term" value="P:regulation of phenylpropanoid metabolic process"/>
    <property type="evidence" value="ECO:0000314"/>
    <property type="project" value="TAIR"/>
</dbReference>
<dbReference type="GO" id="GO:0010345">
    <property type="term" value="P:suberin biosynthetic process"/>
    <property type="evidence" value="ECO:0000315"/>
    <property type="project" value="TAIR"/>
</dbReference>
<dbReference type="CDD" id="cd00167">
    <property type="entry name" value="SANT"/>
    <property type="match status" value="2"/>
</dbReference>
<dbReference type="FunFam" id="1.10.10.60:FF:000001">
    <property type="entry name" value="MYB-related transcription factor"/>
    <property type="match status" value="1"/>
</dbReference>
<dbReference type="FunFam" id="1.10.10.60:FF:000349">
    <property type="entry name" value="Transcription factor MYB39"/>
    <property type="match status" value="1"/>
</dbReference>
<dbReference type="Gene3D" id="1.10.10.60">
    <property type="entry name" value="Homeodomain-like"/>
    <property type="match status" value="2"/>
</dbReference>
<dbReference type="InterPro" id="IPR009057">
    <property type="entry name" value="Homeodomain-like_sf"/>
</dbReference>
<dbReference type="InterPro" id="IPR017930">
    <property type="entry name" value="Myb_dom"/>
</dbReference>
<dbReference type="InterPro" id="IPR015495">
    <property type="entry name" value="Myb_TF_plants"/>
</dbReference>
<dbReference type="InterPro" id="IPR001005">
    <property type="entry name" value="SANT/Myb"/>
</dbReference>
<dbReference type="PANTHER" id="PTHR47994">
    <property type="entry name" value="F14D16.11-RELATED"/>
    <property type="match status" value="1"/>
</dbReference>
<dbReference type="PANTHER" id="PTHR47994:SF5">
    <property type="entry name" value="F14D16.11-RELATED"/>
    <property type="match status" value="1"/>
</dbReference>
<dbReference type="Pfam" id="PF00249">
    <property type="entry name" value="Myb_DNA-binding"/>
    <property type="match status" value="2"/>
</dbReference>
<dbReference type="SMART" id="SM00717">
    <property type="entry name" value="SANT"/>
    <property type="match status" value="2"/>
</dbReference>
<dbReference type="SUPFAM" id="SSF46689">
    <property type="entry name" value="Homeodomain-like"/>
    <property type="match status" value="1"/>
</dbReference>
<dbReference type="PROSITE" id="PS51294">
    <property type="entry name" value="HTH_MYB"/>
    <property type="match status" value="2"/>
</dbReference>
<reference key="1">
    <citation type="journal article" date="2001" name="Curr. Opin. Plant Biol.">
        <title>The R2R3-MYB gene family in Arabidopsis thaliana.</title>
        <authorList>
            <person name="Stracke R."/>
            <person name="Werber M."/>
            <person name="Weisshaar B."/>
        </authorList>
    </citation>
    <scope>NUCLEOTIDE SEQUENCE [MRNA] (ISOFORM 2)</scope>
    <scope>GENE FAMILY</scope>
    <scope>NOMENCLATURE</scope>
    <source>
        <strain>cv. Columbia</strain>
    </source>
</reference>
<reference key="2">
    <citation type="submission" date="2004-02" db="EMBL/GenBank/DDBJ databases">
        <title>The MYB transcription factor family in Arabidopsis: a genome-wide cloning and expression pattern analysis.</title>
        <authorList>
            <person name="Qu L.-J."/>
            <person name="Gu H."/>
        </authorList>
    </citation>
    <scope>NUCLEOTIDE SEQUENCE [MRNA] (ISOFORM 1)</scope>
</reference>
<reference key="3">
    <citation type="journal article" date="1998" name="Nature">
        <title>Analysis of 1.9 Mb of contiguous sequence from chromosome 4 of Arabidopsis thaliana.</title>
        <authorList>
            <person name="Bevan M."/>
            <person name="Bancroft I."/>
            <person name="Bent E."/>
            <person name="Love K."/>
            <person name="Goodman H.M."/>
            <person name="Dean C."/>
            <person name="Bergkamp R."/>
            <person name="Dirkse W."/>
            <person name="van Staveren M."/>
            <person name="Stiekema W."/>
            <person name="Drost L."/>
            <person name="Ridley P."/>
            <person name="Hudson S.-A."/>
            <person name="Patel K."/>
            <person name="Murphy G."/>
            <person name="Piffanelli P."/>
            <person name="Wedler H."/>
            <person name="Wedler E."/>
            <person name="Wambutt R."/>
            <person name="Weitzenegger T."/>
            <person name="Pohl T."/>
            <person name="Terryn N."/>
            <person name="Gielen J."/>
            <person name="Villarroel R."/>
            <person name="De Clercq R."/>
            <person name="van Montagu M."/>
            <person name="Lecharny A."/>
            <person name="Aubourg S."/>
            <person name="Gy I."/>
            <person name="Kreis M."/>
            <person name="Lao N."/>
            <person name="Kavanagh T."/>
            <person name="Hempel S."/>
            <person name="Kotter P."/>
            <person name="Entian K.-D."/>
            <person name="Rieger M."/>
            <person name="Schaefer M."/>
            <person name="Funk B."/>
            <person name="Mueller-Auer S."/>
            <person name="Silvey M."/>
            <person name="James R."/>
            <person name="Monfort A."/>
            <person name="Pons A."/>
            <person name="Puigdomenech P."/>
            <person name="Douka A."/>
            <person name="Voukelatou E."/>
            <person name="Milioni D."/>
            <person name="Hatzopoulos P."/>
            <person name="Piravandi E."/>
            <person name="Obermaier B."/>
            <person name="Hilbert H."/>
            <person name="Duesterhoeft A."/>
            <person name="Moores T."/>
            <person name="Jones J.D.G."/>
            <person name="Eneva T."/>
            <person name="Palme K."/>
            <person name="Benes V."/>
            <person name="Rechmann S."/>
            <person name="Ansorge W."/>
            <person name="Cooke R."/>
            <person name="Berger C."/>
            <person name="Delseny M."/>
            <person name="Voet M."/>
            <person name="Volckaert G."/>
            <person name="Mewes H.-W."/>
            <person name="Klosterman S."/>
            <person name="Schueller C."/>
            <person name="Chalwatzis N."/>
        </authorList>
    </citation>
    <scope>NUCLEOTIDE SEQUENCE [LARGE SCALE GENOMIC DNA]</scope>
    <source>
        <strain>cv. Columbia</strain>
    </source>
</reference>
<reference key="4">
    <citation type="journal article" date="1999" name="Nature">
        <title>Sequence and analysis of chromosome 4 of the plant Arabidopsis thaliana.</title>
        <authorList>
            <person name="Mayer K.F.X."/>
            <person name="Schueller C."/>
            <person name="Wambutt R."/>
            <person name="Murphy G."/>
            <person name="Volckaert G."/>
            <person name="Pohl T."/>
            <person name="Duesterhoeft A."/>
            <person name="Stiekema W."/>
            <person name="Entian K.-D."/>
            <person name="Terryn N."/>
            <person name="Harris B."/>
            <person name="Ansorge W."/>
            <person name="Brandt P."/>
            <person name="Grivell L.A."/>
            <person name="Rieger M."/>
            <person name="Weichselgartner M."/>
            <person name="de Simone V."/>
            <person name="Obermaier B."/>
            <person name="Mache R."/>
            <person name="Mueller M."/>
            <person name="Kreis M."/>
            <person name="Delseny M."/>
            <person name="Puigdomenech P."/>
            <person name="Watson M."/>
            <person name="Schmidtheini T."/>
            <person name="Reichert B."/>
            <person name="Portetelle D."/>
            <person name="Perez-Alonso M."/>
            <person name="Boutry M."/>
            <person name="Bancroft I."/>
            <person name="Vos P."/>
            <person name="Hoheisel J."/>
            <person name="Zimmermann W."/>
            <person name="Wedler H."/>
            <person name="Ridley P."/>
            <person name="Langham S.-A."/>
            <person name="McCullagh B."/>
            <person name="Bilham L."/>
            <person name="Robben J."/>
            <person name="van der Schueren J."/>
            <person name="Grymonprez B."/>
            <person name="Chuang Y.-J."/>
            <person name="Vandenbussche F."/>
            <person name="Braeken M."/>
            <person name="Weltjens I."/>
            <person name="Voet M."/>
            <person name="Bastiaens I."/>
            <person name="Aert R."/>
            <person name="Defoor E."/>
            <person name="Weitzenegger T."/>
            <person name="Bothe G."/>
            <person name="Ramsperger U."/>
            <person name="Hilbert H."/>
            <person name="Braun M."/>
            <person name="Holzer E."/>
            <person name="Brandt A."/>
            <person name="Peters S."/>
            <person name="van Staveren M."/>
            <person name="Dirkse W."/>
            <person name="Mooijman P."/>
            <person name="Klein Lankhorst R."/>
            <person name="Rose M."/>
            <person name="Hauf J."/>
            <person name="Koetter P."/>
            <person name="Berneiser S."/>
            <person name="Hempel S."/>
            <person name="Feldpausch M."/>
            <person name="Lamberth S."/>
            <person name="Van den Daele H."/>
            <person name="De Keyser A."/>
            <person name="Buysshaert C."/>
            <person name="Gielen J."/>
            <person name="Villarroel R."/>
            <person name="De Clercq R."/>
            <person name="van Montagu M."/>
            <person name="Rogers J."/>
            <person name="Cronin A."/>
            <person name="Quail M.A."/>
            <person name="Bray-Allen S."/>
            <person name="Clark L."/>
            <person name="Doggett J."/>
            <person name="Hall S."/>
            <person name="Kay M."/>
            <person name="Lennard N."/>
            <person name="McLay K."/>
            <person name="Mayes R."/>
            <person name="Pettett A."/>
            <person name="Rajandream M.A."/>
            <person name="Lyne M."/>
            <person name="Benes V."/>
            <person name="Rechmann S."/>
            <person name="Borkova D."/>
            <person name="Bloecker H."/>
            <person name="Scharfe M."/>
            <person name="Grimm M."/>
            <person name="Loehnert T.-H."/>
            <person name="Dose S."/>
            <person name="de Haan M."/>
            <person name="Maarse A.C."/>
            <person name="Schaefer M."/>
            <person name="Mueller-Auer S."/>
            <person name="Gabel C."/>
            <person name="Fuchs M."/>
            <person name="Fartmann B."/>
            <person name="Granderath K."/>
            <person name="Dauner D."/>
            <person name="Herzl A."/>
            <person name="Neumann S."/>
            <person name="Argiriou A."/>
            <person name="Vitale D."/>
            <person name="Liguori R."/>
            <person name="Piravandi E."/>
            <person name="Massenet O."/>
            <person name="Quigley F."/>
            <person name="Clabauld G."/>
            <person name="Muendlein A."/>
            <person name="Felber R."/>
            <person name="Schnabl S."/>
            <person name="Hiller R."/>
            <person name="Schmidt W."/>
            <person name="Lecharny A."/>
            <person name="Aubourg S."/>
            <person name="Chefdor F."/>
            <person name="Cooke R."/>
            <person name="Berger C."/>
            <person name="Monfort A."/>
            <person name="Casacuberta E."/>
            <person name="Gibbons T."/>
            <person name="Weber N."/>
            <person name="Vandenbol M."/>
            <person name="Bargues M."/>
            <person name="Terol J."/>
            <person name="Torres A."/>
            <person name="Perez-Perez A."/>
            <person name="Purnelle B."/>
            <person name="Bent E."/>
            <person name="Johnson S."/>
            <person name="Tacon D."/>
            <person name="Jesse T."/>
            <person name="Heijnen L."/>
            <person name="Schwarz S."/>
            <person name="Scholler P."/>
            <person name="Heber S."/>
            <person name="Francs P."/>
            <person name="Bielke C."/>
            <person name="Frishman D."/>
            <person name="Haase D."/>
            <person name="Lemcke K."/>
            <person name="Mewes H.-W."/>
            <person name="Stocker S."/>
            <person name="Zaccaria P."/>
            <person name="Bevan M."/>
            <person name="Wilson R.K."/>
            <person name="de la Bastide M."/>
            <person name="Habermann K."/>
            <person name="Parnell L."/>
            <person name="Dedhia N."/>
            <person name="Gnoj L."/>
            <person name="Schutz K."/>
            <person name="Huang E."/>
            <person name="Spiegel L."/>
            <person name="Sekhon M."/>
            <person name="Murray J."/>
            <person name="Sheet P."/>
            <person name="Cordes M."/>
            <person name="Abu-Threideh J."/>
            <person name="Stoneking T."/>
            <person name="Kalicki J."/>
            <person name="Graves T."/>
            <person name="Harmon G."/>
            <person name="Edwards J."/>
            <person name="Latreille P."/>
            <person name="Courtney L."/>
            <person name="Cloud J."/>
            <person name="Abbott A."/>
            <person name="Scott K."/>
            <person name="Johnson D."/>
            <person name="Minx P."/>
            <person name="Bentley D."/>
            <person name="Fulton B."/>
            <person name="Miller N."/>
            <person name="Greco T."/>
            <person name="Kemp K."/>
            <person name="Kramer J."/>
            <person name="Fulton L."/>
            <person name="Mardis E."/>
            <person name="Dante M."/>
            <person name="Pepin K."/>
            <person name="Hillier L.W."/>
            <person name="Nelson J."/>
            <person name="Spieth J."/>
            <person name="Ryan E."/>
            <person name="Andrews S."/>
            <person name="Geisel C."/>
            <person name="Layman D."/>
            <person name="Du H."/>
            <person name="Ali J."/>
            <person name="Berghoff A."/>
            <person name="Jones K."/>
            <person name="Drone K."/>
            <person name="Cotton M."/>
            <person name="Joshu C."/>
            <person name="Antonoiu B."/>
            <person name="Zidanic M."/>
            <person name="Strong C."/>
            <person name="Sun H."/>
            <person name="Lamar B."/>
            <person name="Yordan C."/>
            <person name="Ma P."/>
            <person name="Zhong J."/>
            <person name="Preston R."/>
            <person name="Vil D."/>
            <person name="Shekher M."/>
            <person name="Matero A."/>
            <person name="Shah R."/>
            <person name="Swaby I.K."/>
            <person name="O'Shaughnessy A."/>
            <person name="Rodriguez M."/>
            <person name="Hoffman J."/>
            <person name="Till S."/>
            <person name="Granat S."/>
            <person name="Shohdy N."/>
            <person name="Hasegawa A."/>
            <person name="Hameed A."/>
            <person name="Lodhi M."/>
            <person name="Johnson A."/>
            <person name="Chen E."/>
            <person name="Marra M.A."/>
            <person name="Martienssen R."/>
            <person name="McCombie W.R."/>
        </authorList>
    </citation>
    <scope>NUCLEOTIDE SEQUENCE [LARGE SCALE GENOMIC DNA]</scope>
    <source>
        <strain>cv. Columbia</strain>
    </source>
</reference>
<reference key="5">
    <citation type="journal article" date="2017" name="Plant J.">
        <title>Araport11: a complete reannotation of the Arabidopsis thaliana reference genome.</title>
        <authorList>
            <person name="Cheng C.Y."/>
            <person name="Krishnakumar V."/>
            <person name="Chan A.P."/>
            <person name="Thibaud-Nissen F."/>
            <person name="Schobel S."/>
            <person name="Town C.D."/>
        </authorList>
    </citation>
    <scope>GENOME REANNOTATION</scope>
    <source>
        <strain>cv. Columbia</strain>
    </source>
</reference>
<reference key="6">
    <citation type="journal article" date="2002" name="Science">
        <title>Functional annotation of a full-length Arabidopsis cDNA collection.</title>
        <authorList>
            <person name="Seki M."/>
            <person name="Narusaka M."/>
            <person name="Kamiya A."/>
            <person name="Ishida J."/>
            <person name="Satou M."/>
            <person name="Sakurai T."/>
            <person name="Nakajima M."/>
            <person name="Enju A."/>
            <person name="Akiyama K."/>
            <person name="Oono Y."/>
            <person name="Muramatsu M."/>
            <person name="Hayashizaki Y."/>
            <person name="Kawai J."/>
            <person name="Carninci P."/>
            <person name="Itoh M."/>
            <person name="Ishii Y."/>
            <person name="Arakawa T."/>
            <person name="Shibata K."/>
            <person name="Shinagawa A."/>
            <person name="Shinozaki K."/>
        </authorList>
    </citation>
    <scope>NUCLEOTIDE SEQUENCE [LARGE SCALE MRNA] (ISOFORM 1)</scope>
    <source>
        <strain>cv. Columbia</strain>
    </source>
</reference>
<reference key="7">
    <citation type="journal article" date="2003" name="Science">
        <title>Empirical analysis of transcriptional activity in the Arabidopsis genome.</title>
        <authorList>
            <person name="Yamada K."/>
            <person name="Lim J."/>
            <person name="Dale J.M."/>
            <person name="Chen H."/>
            <person name="Shinn P."/>
            <person name="Palm C.J."/>
            <person name="Southwick A.M."/>
            <person name="Wu H.C."/>
            <person name="Kim C.J."/>
            <person name="Nguyen M."/>
            <person name="Pham P.K."/>
            <person name="Cheuk R.F."/>
            <person name="Karlin-Newmann G."/>
            <person name="Liu S.X."/>
            <person name="Lam B."/>
            <person name="Sakano H."/>
            <person name="Wu T."/>
            <person name="Yu G."/>
            <person name="Miranda M."/>
            <person name="Quach H.L."/>
            <person name="Tripp M."/>
            <person name="Chang C.H."/>
            <person name="Lee J.M."/>
            <person name="Toriumi M.J."/>
            <person name="Chan M.M."/>
            <person name="Tang C.C."/>
            <person name="Onodera C.S."/>
            <person name="Deng J.M."/>
            <person name="Akiyama K."/>
            <person name="Ansari Y."/>
            <person name="Arakawa T."/>
            <person name="Banh J."/>
            <person name="Banno F."/>
            <person name="Bowser L."/>
            <person name="Brooks S.Y."/>
            <person name="Carninci P."/>
            <person name="Chao Q."/>
            <person name="Choy N."/>
            <person name="Enju A."/>
            <person name="Goldsmith A.D."/>
            <person name="Gurjal M."/>
            <person name="Hansen N.F."/>
            <person name="Hayashizaki Y."/>
            <person name="Johnson-Hopson C."/>
            <person name="Hsuan V.W."/>
            <person name="Iida K."/>
            <person name="Karnes M."/>
            <person name="Khan S."/>
            <person name="Koesema E."/>
            <person name="Ishida J."/>
            <person name="Jiang P.X."/>
            <person name="Jones T."/>
            <person name="Kawai J."/>
            <person name="Kamiya A."/>
            <person name="Meyers C."/>
            <person name="Nakajima M."/>
            <person name="Narusaka M."/>
            <person name="Seki M."/>
            <person name="Sakurai T."/>
            <person name="Satou M."/>
            <person name="Tamse R."/>
            <person name="Vaysberg M."/>
            <person name="Wallender E.K."/>
            <person name="Wong C."/>
            <person name="Yamamura Y."/>
            <person name="Yuan S."/>
            <person name="Shinozaki K."/>
            <person name="Davis R.W."/>
            <person name="Theologis A."/>
            <person name="Ecker J.R."/>
        </authorList>
    </citation>
    <scope>NUCLEOTIDE SEQUENCE [LARGE SCALE MRNA] (ISOFORM 1)</scope>
    <source>
        <strain>cv. Columbia</strain>
    </source>
</reference>
<reference key="8">
    <citation type="journal article" date="2006" name="Plant Mol. Biol.">
        <title>The MYB transcription factor superfamily of Arabidopsis: expression analysis and phylogenetic comparison with the rice MYB family.</title>
        <authorList>
            <person name="Chen Y."/>
            <person name="Yang X."/>
            <person name="He K."/>
            <person name="Liu M."/>
            <person name="Li J."/>
            <person name="Gao Z."/>
            <person name="Lin Z."/>
            <person name="Zhang Y."/>
            <person name="Wang X."/>
            <person name="Qiu X."/>
            <person name="Shen Y."/>
            <person name="Zhang L."/>
            <person name="Deng X."/>
            <person name="Luo J."/>
            <person name="Deng X.-W."/>
            <person name="Chen Z."/>
            <person name="Gu H."/>
            <person name="Qu L.-J."/>
        </authorList>
    </citation>
    <scope>GENE FAMILY</scope>
</reference>
<comment type="interaction">
    <interactant intactId="EBI-4440057">
        <id>Q8GWP0</id>
    </interactant>
    <interactant intactId="EBI-530486">
        <id>P46639</id>
        <label>KNAT1</label>
    </interactant>
    <organismsDiffer>false</organismsDiffer>
    <experiments>3</experiments>
</comment>
<comment type="subcellular location">
    <subcellularLocation>
        <location evidence="1">Nucleus</location>
    </subcellularLocation>
</comment>
<comment type="alternative products">
    <event type="alternative splicing"/>
    <isoform>
        <id>Q8GWP0-1</id>
        <name>1</name>
        <sequence type="displayed"/>
    </isoform>
    <isoform>
        <id>Q8GWP0-2</id>
        <name>2</name>
        <sequence type="described" ref="VSP_022946"/>
    </isoform>
</comment>
<comment type="sequence caution" evidence="4">
    <conflict type="erroneous gene model prediction">
        <sequence resource="EMBL-CDS" id="CAB10558"/>
    </conflict>
    <text>The predicted gene At4g17780 has been split into 2 genes: At4g17780 and At4g17785.</text>
</comment>
<comment type="sequence caution" evidence="4">
    <conflict type="erroneous gene model prediction">
        <sequence resource="EMBL-CDS" id="CAB78781"/>
    </conflict>
    <text>The predicted gene At4g17780 has been split into 2 genes: At4g17780 and At4g17785.</text>
</comment>
<keyword id="KW-0025">Alternative splicing</keyword>
<keyword id="KW-0238">DNA-binding</keyword>
<keyword id="KW-0539">Nucleus</keyword>
<keyword id="KW-1185">Reference proteome</keyword>
<keyword id="KW-0677">Repeat</keyword>
<proteinExistence type="evidence at protein level"/>
<accession>Q8GWP0</accession>
<accession>O23618</accession>
<accession>Q9SPG8</accession>
<feature type="chain" id="PRO_0000274936" description="Transcription factor MYB39">
    <location>
        <begin position="1"/>
        <end position="360"/>
    </location>
</feature>
<feature type="domain" description="HTH myb-type 1" evidence="1">
    <location>
        <begin position="10"/>
        <end position="62"/>
    </location>
</feature>
<feature type="domain" description="HTH myb-type 2" evidence="1">
    <location>
        <begin position="63"/>
        <end position="117"/>
    </location>
</feature>
<feature type="DNA-binding region" description="H-T-H motif" evidence="1">
    <location>
        <begin position="38"/>
        <end position="62"/>
    </location>
</feature>
<feature type="DNA-binding region" description="H-T-H motif" evidence="1">
    <location>
        <begin position="90"/>
        <end position="113"/>
    </location>
</feature>
<feature type="region of interest" description="Disordered" evidence="2">
    <location>
        <begin position="299"/>
        <end position="324"/>
    </location>
</feature>
<feature type="splice variant" id="VSP_022946" description="In isoform 2." evidence="3">
    <original>DLTSPTSSPVPW</original>
    <variation>E</variation>
    <location>
        <begin position="349"/>
        <end position="360"/>
    </location>
</feature>
<sequence length="360" mass="40023">MGRSPCCDQDKGVKKGPWLPEEDDKLTAYINENGYGNWRSLPKLAGLNRCGKSCRLRWMNYLRPDIRRGKFSDGEESTIVRLHALLGNKWSKIAGHLPGRTDNEIKNYWNTHMRKKLLQMGIDPVTHEPRTNDLSPILDVSQMLAAAINNGQFGNNNLLNNNTALEDILKLQLIHKMLQIITPKAIPNISSFKTNLLNPKPEPVVNSFNTNSVNPKPDPPAGLFINQSGITPEAASDFIPSYENVWDGFEDNQLPGLVTVSQESLNTAKPGTSTTTKVNDHIRTGMMPCYYGDQLLETPSTGSVSVSPETTSLNHPSTAQHSSGSDFLEDWEKFLDDETSDSCWKSFLDLTSPTSSPVPW</sequence>
<organism>
    <name type="scientific">Arabidopsis thaliana</name>
    <name type="common">Mouse-ear cress</name>
    <dbReference type="NCBI Taxonomy" id="3702"/>
    <lineage>
        <taxon>Eukaryota</taxon>
        <taxon>Viridiplantae</taxon>
        <taxon>Streptophyta</taxon>
        <taxon>Embryophyta</taxon>
        <taxon>Tracheophyta</taxon>
        <taxon>Spermatophyta</taxon>
        <taxon>Magnoliopsida</taxon>
        <taxon>eudicotyledons</taxon>
        <taxon>Gunneridae</taxon>
        <taxon>Pentapetalae</taxon>
        <taxon>rosids</taxon>
        <taxon>malvids</taxon>
        <taxon>Brassicales</taxon>
        <taxon>Brassicaceae</taxon>
        <taxon>Camelineae</taxon>
        <taxon>Arabidopsis</taxon>
    </lineage>
</organism>
<gene>
    <name type="primary">MYB39</name>
    <name type="synonym">FCA0</name>
    <name type="ordered locus">At4g17785</name>
    <name type="ORF">dl4925c</name>
</gene>
<name>MYB39_ARATH</name>
<evidence type="ECO:0000255" key="1">
    <source>
        <dbReference type="PROSITE-ProRule" id="PRU00625"/>
    </source>
</evidence>
<evidence type="ECO:0000256" key="2">
    <source>
        <dbReference type="SAM" id="MobiDB-lite"/>
    </source>
</evidence>
<evidence type="ECO:0000303" key="3">
    <source>
    </source>
</evidence>
<evidence type="ECO:0000305" key="4"/>